<evidence type="ECO:0000250" key="1">
    <source>
        <dbReference type="UniProtKB" id="P50544"/>
    </source>
</evidence>
<evidence type="ECO:0000256" key="2">
    <source>
        <dbReference type="SAM" id="MobiDB-lite"/>
    </source>
</evidence>
<evidence type="ECO:0000269" key="3">
    <source>
    </source>
</evidence>
<evidence type="ECO:0000269" key="4">
    <source>
    </source>
</evidence>
<evidence type="ECO:0000269" key="5">
    <source>
    </source>
</evidence>
<evidence type="ECO:0000269" key="6">
    <source>
    </source>
</evidence>
<evidence type="ECO:0000269" key="7">
    <source>
    </source>
</evidence>
<evidence type="ECO:0000269" key="8">
    <source>
    </source>
</evidence>
<evidence type="ECO:0000269" key="9">
    <source>
    </source>
</evidence>
<evidence type="ECO:0000269" key="10">
    <source>
    </source>
</evidence>
<evidence type="ECO:0000269" key="11">
    <source>
    </source>
</evidence>
<evidence type="ECO:0000269" key="12">
    <source>
    </source>
</evidence>
<evidence type="ECO:0000269" key="13">
    <source>
    </source>
</evidence>
<evidence type="ECO:0000269" key="14">
    <source>
    </source>
</evidence>
<evidence type="ECO:0000303" key="15">
    <source>
    </source>
</evidence>
<evidence type="ECO:0000303" key="16">
    <source>
    </source>
</evidence>
<evidence type="ECO:0000303" key="17">
    <source>
    </source>
</evidence>
<evidence type="ECO:0000303" key="18">
    <source>
    </source>
</evidence>
<evidence type="ECO:0000305" key="19"/>
<evidence type="ECO:0000305" key="20">
    <source>
    </source>
</evidence>
<evidence type="ECO:0000305" key="21">
    <source>
    </source>
</evidence>
<evidence type="ECO:0000305" key="22">
    <source>
    </source>
</evidence>
<evidence type="ECO:0000305" key="23">
    <source>
    </source>
</evidence>
<evidence type="ECO:0000312" key="24">
    <source>
        <dbReference type="HGNC" id="HGNC:92"/>
    </source>
</evidence>
<evidence type="ECO:0007744" key="25">
    <source>
        <dbReference type="PDB" id="2UXW"/>
    </source>
</evidence>
<evidence type="ECO:0007744" key="26">
    <source>
        <dbReference type="PDB" id="3B96"/>
    </source>
</evidence>
<evidence type="ECO:0007744" key="27">
    <source>
    </source>
</evidence>
<evidence type="ECO:0007744" key="28">
    <source>
    </source>
</evidence>
<evidence type="ECO:0007744" key="29">
    <source>
    </source>
</evidence>
<evidence type="ECO:0007829" key="30">
    <source>
        <dbReference type="PDB" id="7S7G"/>
    </source>
</evidence>
<sequence length="655" mass="70390">MQAARMAASLGRQLLRLGGGSSRLTALLGQPRPGPARRPYAGGAAQLALDKSDSHPSDALTRKKPAKAESKSFAVGMFKGQLTTDQVFPYPSVLNEEQTQFLKELVEPVSRFFEEVNDPAKNDALEMVEETTWQGLKELGAFGLQVPSELGGVGLCNTQYARLVEIVGMHDLGVGITLGAHQSIGFKGILLFGTKAQKEKYLPKLASGETVAAFCLTEPSSGSDAASIRTSAVPSPCGKYYTLNGSKLWISNGGLADIFTVFAKTPVTDPATGAVKEKITAFVVERGFGGITHGPPEKKMGIKASNTAEVFFDGVRVPSENVLGEVGSGFKVAMHILNNGRFGMAAALAGTMRGIIAKAVDHATNRTQFGEKIHNFGLIQEKLARMVMLQYVTESMAYMVSANMDQGATDFQIEAAISKIFGSEAAWKVTDECIQIMGGMGFMKEPGVERVLRDLRIFRIFEGTNDILRLFVALQGCMDKGKELSGLGSALKNPFGNAGLLLGEAGKQLRRRAGLGSGLSLSGLVHPELSRSGELAVRALEQFATVVEAKLIKHKKGIVNEQFLLQRLADGAIDLYAMVVVLSRASRSLSEGHPTAQHEKMLCDTWCIEAAARIREGMAALQSDPWQQELYRNFKSISKALVERGGVVTSNPLGF</sequence>
<organism>
    <name type="scientific">Homo sapiens</name>
    <name type="common">Human</name>
    <dbReference type="NCBI Taxonomy" id="9606"/>
    <lineage>
        <taxon>Eukaryota</taxon>
        <taxon>Metazoa</taxon>
        <taxon>Chordata</taxon>
        <taxon>Craniata</taxon>
        <taxon>Vertebrata</taxon>
        <taxon>Euteleostomi</taxon>
        <taxon>Mammalia</taxon>
        <taxon>Eutheria</taxon>
        <taxon>Euarchontoglires</taxon>
        <taxon>Primates</taxon>
        <taxon>Haplorrhini</taxon>
        <taxon>Catarrhini</taxon>
        <taxon>Hominidae</taxon>
        <taxon>Homo</taxon>
    </lineage>
</organism>
<protein>
    <recommendedName>
        <fullName evidence="23">Very long-chain specific acyl-CoA dehydrogenase, mitochondrial</fullName>
        <shortName evidence="18">VLCAD</shortName>
        <ecNumber evidence="4 6 7 10 12 13">1.3.8.9</ecNumber>
    </recommendedName>
</protein>
<dbReference type="EC" id="1.3.8.9" evidence="4 6 7 10 12 13"/>
<dbReference type="EMBL" id="D43682">
    <property type="protein sequence ID" value="BAA07781.1"/>
    <property type="molecule type" value="mRNA"/>
</dbReference>
<dbReference type="EMBL" id="L46590">
    <property type="protein sequence ID" value="AAA79002.1"/>
    <property type="molecule type" value="Genomic_DNA"/>
</dbReference>
<dbReference type="EMBL" id="X86556">
    <property type="protein sequence ID" value="CAA60253.1"/>
    <property type="molecule type" value="mRNA"/>
</dbReference>
<dbReference type="EMBL" id="D78298">
    <property type="protein sequence ID" value="BAA29057.1"/>
    <property type="molecule type" value="Genomic_DNA"/>
</dbReference>
<dbReference type="EMBL" id="AK293549">
    <property type="protein sequence ID" value="BAG57027.1"/>
    <property type="molecule type" value="mRNA"/>
</dbReference>
<dbReference type="EMBL" id="AC120057">
    <property type="status" value="NOT_ANNOTATED_CDS"/>
    <property type="molecule type" value="Genomic_DNA"/>
</dbReference>
<dbReference type="EMBL" id="BC000399">
    <property type="protein sequence ID" value="AAH00399.1"/>
    <property type="molecule type" value="mRNA"/>
</dbReference>
<dbReference type="EMBL" id="BC012912">
    <property type="protein sequence ID" value="AAH12912.1"/>
    <property type="molecule type" value="mRNA"/>
</dbReference>
<dbReference type="EMBL" id="BC020218">
    <property type="protein sequence ID" value="AAH20218.1"/>
    <property type="molecule type" value="mRNA"/>
</dbReference>
<dbReference type="CCDS" id="CCDS11090.1">
    <molecule id="P49748-1"/>
</dbReference>
<dbReference type="CCDS" id="CCDS42249.1">
    <molecule id="P49748-2"/>
</dbReference>
<dbReference type="CCDS" id="CCDS58509.1">
    <molecule id="P49748-3"/>
</dbReference>
<dbReference type="PIR" id="S54183">
    <property type="entry name" value="S54183"/>
</dbReference>
<dbReference type="RefSeq" id="NP_000009.1">
    <molecule id="P49748-1"/>
    <property type="nucleotide sequence ID" value="NM_000018.4"/>
</dbReference>
<dbReference type="RefSeq" id="NP_001029031.1">
    <molecule id="P49748-2"/>
    <property type="nucleotide sequence ID" value="NM_001033859.3"/>
</dbReference>
<dbReference type="RefSeq" id="NP_001257376.1">
    <molecule id="P49748-3"/>
    <property type="nucleotide sequence ID" value="NM_001270447.2"/>
</dbReference>
<dbReference type="PDB" id="2UXW">
    <property type="method" value="X-ray"/>
    <property type="resolution" value="1.45 A"/>
    <property type="chains" value="A=72-655"/>
</dbReference>
<dbReference type="PDB" id="3B96">
    <property type="method" value="X-ray"/>
    <property type="resolution" value="1.91 A"/>
    <property type="chains" value="A=69-655"/>
</dbReference>
<dbReference type="PDB" id="7S7G">
    <property type="method" value="X-ray"/>
    <property type="resolution" value="1.34 A"/>
    <property type="chains" value="A=69-655"/>
</dbReference>
<dbReference type="PDBsum" id="2UXW"/>
<dbReference type="PDBsum" id="3B96"/>
<dbReference type="PDBsum" id="7S7G"/>
<dbReference type="SASBDB" id="P49748"/>
<dbReference type="SMR" id="P49748"/>
<dbReference type="BioGRID" id="106555">
    <property type="interactions" value="146"/>
</dbReference>
<dbReference type="FunCoup" id="P49748">
    <property type="interactions" value="1596"/>
</dbReference>
<dbReference type="IntAct" id="P49748">
    <property type="interactions" value="59"/>
</dbReference>
<dbReference type="MINT" id="P49748"/>
<dbReference type="STRING" id="9606.ENSP00000438689"/>
<dbReference type="ChEMBL" id="CHEMBL4105892"/>
<dbReference type="SwissLipids" id="SLP:000001330">
    <molecule id="P49748-2"/>
</dbReference>
<dbReference type="SwissLipids" id="SLP:000001332"/>
<dbReference type="CarbonylDB" id="P49748"/>
<dbReference type="GlyGen" id="P49748">
    <property type="glycosylation" value="3 sites, 1 O-linked glycan (3 sites)"/>
</dbReference>
<dbReference type="iPTMnet" id="P49748"/>
<dbReference type="PhosphoSitePlus" id="P49748"/>
<dbReference type="SwissPalm" id="P49748"/>
<dbReference type="BioMuta" id="ACADVL"/>
<dbReference type="DMDM" id="1703068"/>
<dbReference type="CPTAC" id="CPTAC-454"/>
<dbReference type="CPTAC" id="CPTAC-455"/>
<dbReference type="jPOST" id="P49748"/>
<dbReference type="MassIVE" id="P49748"/>
<dbReference type="PaxDb" id="9606-ENSP00000438689"/>
<dbReference type="PeptideAtlas" id="P49748"/>
<dbReference type="ProteomicsDB" id="25916"/>
<dbReference type="ProteomicsDB" id="56061">
    <molecule id="P49748-1"/>
</dbReference>
<dbReference type="ProteomicsDB" id="56062">
    <molecule id="P49748-2"/>
</dbReference>
<dbReference type="Pumba" id="P49748"/>
<dbReference type="Antibodypedia" id="11798">
    <property type="antibodies" value="294 antibodies from 33 providers"/>
</dbReference>
<dbReference type="DNASU" id="37"/>
<dbReference type="Ensembl" id="ENST00000350303.9">
    <molecule id="P49748-2"/>
    <property type="protein sequence ID" value="ENSP00000344152.5"/>
    <property type="gene ID" value="ENSG00000072778.20"/>
</dbReference>
<dbReference type="Ensembl" id="ENST00000356839.10">
    <molecule id="P49748-1"/>
    <property type="protein sequence ID" value="ENSP00000349297.5"/>
    <property type="gene ID" value="ENSG00000072778.20"/>
</dbReference>
<dbReference type="Ensembl" id="ENST00000543245.6">
    <molecule id="P49748-3"/>
    <property type="protein sequence ID" value="ENSP00000438689.2"/>
    <property type="gene ID" value="ENSG00000072778.20"/>
</dbReference>
<dbReference type="GeneID" id="37"/>
<dbReference type="KEGG" id="hsa:37"/>
<dbReference type="MANE-Select" id="ENST00000356839.10">
    <property type="protein sequence ID" value="ENSP00000349297.5"/>
    <property type="RefSeq nucleotide sequence ID" value="NM_000018.4"/>
    <property type="RefSeq protein sequence ID" value="NP_000009.1"/>
</dbReference>
<dbReference type="UCSC" id="uc002gev.5">
    <molecule id="P49748-1"/>
    <property type="organism name" value="human"/>
</dbReference>
<dbReference type="AGR" id="HGNC:92"/>
<dbReference type="CTD" id="37"/>
<dbReference type="DisGeNET" id="37"/>
<dbReference type="GeneCards" id="ACADVL"/>
<dbReference type="GeneReviews" id="ACADVL"/>
<dbReference type="HGNC" id="HGNC:92">
    <property type="gene designation" value="ACADVL"/>
</dbReference>
<dbReference type="HPA" id="ENSG00000072778">
    <property type="expression patterns" value="Tissue enhanced (skeletal)"/>
</dbReference>
<dbReference type="MalaCards" id="ACADVL"/>
<dbReference type="MIM" id="201475">
    <property type="type" value="phenotype"/>
</dbReference>
<dbReference type="MIM" id="609575">
    <property type="type" value="gene"/>
</dbReference>
<dbReference type="neXtProt" id="NX_P49748"/>
<dbReference type="OpenTargets" id="ENSG00000072778"/>
<dbReference type="Orphanet" id="26793">
    <property type="disease" value="Very long chain acyl-CoA dehydrogenase deficiency"/>
</dbReference>
<dbReference type="PharmGKB" id="PA24428"/>
<dbReference type="VEuPathDB" id="HostDB:ENSG00000072778"/>
<dbReference type="eggNOG" id="KOG0137">
    <property type="taxonomic scope" value="Eukaryota"/>
</dbReference>
<dbReference type="GeneTree" id="ENSGT00940000158535"/>
<dbReference type="HOGENOM" id="CLU_018204_11_2_1"/>
<dbReference type="InParanoid" id="P49748"/>
<dbReference type="OMA" id="NAFMGLR"/>
<dbReference type="OrthoDB" id="2588832at2759"/>
<dbReference type="PAN-GO" id="P49748">
    <property type="GO annotations" value="3 GO annotations based on evolutionary models"/>
</dbReference>
<dbReference type="PhylomeDB" id="P49748"/>
<dbReference type="TreeFam" id="TF105053"/>
<dbReference type="BioCyc" id="MetaCyc:ENSG00000072778-MONOMER"/>
<dbReference type="BRENDA" id="1.3.8.8">
    <property type="organism ID" value="2681"/>
</dbReference>
<dbReference type="BRENDA" id="1.3.8.9">
    <property type="organism ID" value="2681"/>
</dbReference>
<dbReference type="PathwayCommons" id="P49748"/>
<dbReference type="Reactome" id="R-HSA-381038">
    <property type="pathway name" value="XBP1(S) activates chaperone genes"/>
</dbReference>
<dbReference type="Reactome" id="R-HSA-77305">
    <property type="pathway name" value="Beta oxidation of palmitoyl-CoA to myristoyl-CoA"/>
</dbReference>
<dbReference type="SignaLink" id="P49748"/>
<dbReference type="SIGNOR" id="P49748"/>
<dbReference type="UniPathway" id="UPA00660"/>
<dbReference type="BioGRID-ORCS" id="37">
    <property type="hits" value="9 hits in 1156 CRISPR screens"/>
</dbReference>
<dbReference type="ChiTaRS" id="ACADVL">
    <property type="organism name" value="human"/>
</dbReference>
<dbReference type="EvolutionaryTrace" id="P49748"/>
<dbReference type="GenomeRNAi" id="37"/>
<dbReference type="Pharos" id="P49748">
    <property type="development level" value="Tbio"/>
</dbReference>
<dbReference type="PRO" id="PR:P49748"/>
<dbReference type="Proteomes" id="UP000005640">
    <property type="component" value="Chromosome 17"/>
</dbReference>
<dbReference type="RNAct" id="P49748">
    <property type="molecule type" value="protein"/>
</dbReference>
<dbReference type="Bgee" id="ENSG00000072778">
    <property type="expression patterns" value="Expressed in right adrenal gland cortex and 203 other cell types or tissues"/>
</dbReference>
<dbReference type="ExpressionAtlas" id="P49748">
    <property type="expression patterns" value="baseline and differential"/>
</dbReference>
<dbReference type="GO" id="GO:0005743">
    <property type="term" value="C:mitochondrial inner membrane"/>
    <property type="evidence" value="ECO:0007669"/>
    <property type="project" value="UniProtKB-SubCell"/>
</dbReference>
<dbReference type="GO" id="GO:0005759">
    <property type="term" value="C:mitochondrial matrix"/>
    <property type="evidence" value="ECO:0000304"/>
    <property type="project" value="Reactome"/>
</dbReference>
<dbReference type="GO" id="GO:0031966">
    <property type="term" value="C:mitochondrial membrane"/>
    <property type="evidence" value="ECO:0000314"/>
    <property type="project" value="BHF-UCL"/>
</dbReference>
<dbReference type="GO" id="GO:0042645">
    <property type="term" value="C:mitochondrial nucleoid"/>
    <property type="evidence" value="ECO:0000314"/>
    <property type="project" value="BHF-UCL"/>
</dbReference>
<dbReference type="GO" id="GO:0005739">
    <property type="term" value="C:mitochondrion"/>
    <property type="evidence" value="ECO:0000314"/>
    <property type="project" value="HPA"/>
</dbReference>
<dbReference type="GO" id="GO:0005730">
    <property type="term" value="C:nucleolus"/>
    <property type="evidence" value="ECO:0000314"/>
    <property type="project" value="HPA"/>
</dbReference>
<dbReference type="GO" id="GO:0005654">
    <property type="term" value="C:nucleoplasm"/>
    <property type="evidence" value="ECO:0000314"/>
    <property type="project" value="HPA"/>
</dbReference>
<dbReference type="GO" id="GO:0003995">
    <property type="term" value="F:acyl-CoA dehydrogenase activity"/>
    <property type="evidence" value="ECO:0000315"/>
    <property type="project" value="UniProtKB"/>
</dbReference>
<dbReference type="GO" id="GO:0000062">
    <property type="term" value="F:fatty-acyl-CoA binding"/>
    <property type="evidence" value="ECO:0000318"/>
    <property type="project" value="GO_Central"/>
</dbReference>
<dbReference type="GO" id="GO:0050660">
    <property type="term" value="F:flavin adenine dinucleotide binding"/>
    <property type="evidence" value="ECO:0000314"/>
    <property type="project" value="UniProtKB"/>
</dbReference>
<dbReference type="GO" id="GO:0042802">
    <property type="term" value="F:identical protein binding"/>
    <property type="evidence" value="ECO:0000314"/>
    <property type="project" value="UniProtKB"/>
</dbReference>
<dbReference type="GO" id="GO:0004466">
    <property type="term" value="F:long-chain fatty acyl-CoA dehydrogenase activity"/>
    <property type="evidence" value="ECO:0000314"/>
    <property type="project" value="BHF-UCL"/>
</dbReference>
<dbReference type="GO" id="GO:0017099">
    <property type="term" value="F:very-long-chain fatty acyl-CoA dehydrogenase activity"/>
    <property type="evidence" value="ECO:0000314"/>
    <property type="project" value="UniProtKB"/>
</dbReference>
<dbReference type="GO" id="GO:0015980">
    <property type="term" value="P:energy derivation by oxidation of organic compounds"/>
    <property type="evidence" value="ECO:0000304"/>
    <property type="project" value="ProtInc"/>
</dbReference>
<dbReference type="GO" id="GO:0030855">
    <property type="term" value="P:epithelial cell differentiation"/>
    <property type="evidence" value="ECO:0000270"/>
    <property type="project" value="UniProtKB"/>
</dbReference>
<dbReference type="GO" id="GO:0033539">
    <property type="term" value="P:fatty acid beta-oxidation using acyl-CoA dehydrogenase"/>
    <property type="evidence" value="ECO:0000314"/>
    <property type="project" value="BHF-UCL"/>
</dbReference>
<dbReference type="GO" id="GO:0045717">
    <property type="term" value="P:negative regulation of fatty acid biosynthetic process"/>
    <property type="evidence" value="ECO:0000250"/>
    <property type="project" value="BHF-UCL"/>
</dbReference>
<dbReference type="GO" id="GO:0046322">
    <property type="term" value="P:negative regulation of fatty acid oxidation"/>
    <property type="evidence" value="ECO:0000250"/>
    <property type="project" value="BHF-UCL"/>
</dbReference>
<dbReference type="GO" id="GO:0090181">
    <property type="term" value="P:regulation of cholesterol metabolic process"/>
    <property type="evidence" value="ECO:0000250"/>
    <property type="project" value="BHF-UCL"/>
</dbReference>
<dbReference type="GO" id="GO:0009409">
    <property type="term" value="P:response to cold"/>
    <property type="evidence" value="ECO:0007669"/>
    <property type="project" value="Ensembl"/>
</dbReference>
<dbReference type="GO" id="GO:0001659">
    <property type="term" value="P:temperature homeostasis"/>
    <property type="evidence" value="ECO:0000250"/>
    <property type="project" value="BHF-UCL"/>
</dbReference>
<dbReference type="CDD" id="cd01161">
    <property type="entry name" value="VLCAD"/>
    <property type="match status" value="1"/>
</dbReference>
<dbReference type="FunFam" id="1.20.140.10:FF:000008">
    <property type="entry name" value="acyl-CoA dehydrogenase family member 9, mitochondrial"/>
    <property type="match status" value="1"/>
</dbReference>
<dbReference type="FunFam" id="1.20.140.10:FF:000017">
    <property type="entry name" value="very long-chain specific acyl-CoA dehydrogenase, mitochondrial"/>
    <property type="match status" value="1"/>
</dbReference>
<dbReference type="FunFam" id="2.40.110.10:FF:000006">
    <property type="entry name" value="very long-chain specific acyl-CoA dehydrogenase, mitochondrial"/>
    <property type="match status" value="1"/>
</dbReference>
<dbReference type="FunFam" id="1.10.540.10:FF:000001">
    <property type="entry name" value="Very long-chain-specific acyl-CoA dehydrogenase, mitochondrial"/>
    <property type="match status" value="1"/>
</dbReference>
<dbReference type="Gene3D" id="1.10.540.10">
    <property type="entry name" value="Acyl-CoA dehydrogenase/oxidase, N-terminal domain"/>
    <property type="match status" value="1"/>
</dbReference>
<dbReference type="Gene3D" id="2.40.110.10">
    <property type="entry name" value="Butyryl-CoA Dehydrogenase, subunit A, domain 2"/>
    <property type="match status" value="1"/>
</dbReference>
<dbReference type="Gene3D" id="1.20.140.10">
    <property type="entry name" value="Butyryl-CoA Dehydrogenase, subunit A, domain 3"/>
    <property type="match status" value="2"/>
</dbReference>
<dbReference type="InterPro" id="IPR049448">
    <property type="entry name" value="ACAD9/ACADV-like_C"/>
</dbReference>
<dbReference type="InterPro" id="IPR006089">
    <property type="entry name" value="Acyl-CoA_DH_CS"/>
</dbReference>
<dbReference type="InterPro" id="IPR006091">
    <property type="entry name" value="Acyl-CoA_Oxase/DH_mid-dom"/>
</dbReference>
<dbReference type="InterPro" id="IPR046373">
    <property type="entry name" value="Acyl-CoA_Oxase/DH_mid-dom_sf"/>
</dbReference>
<dbReference type="InterPro" id="IPR036250">
    <property type="entry name" value="AcylCo_DH-like_C"/>
</dbReference>
<dbReference type="InterPro" id="IPR009075">
    <property type="entry name" value="AcylCo_DH/oxidase_C"/>
</dbReference>
<dbReference type="InterPro" id="IPR013786">
    <property type="entry name" value="AcylCoA_DH/ox_N"/>
</dbReference>
<dbReference type="InterPro" id="IPR037069">
    <property type="entry name" value="AcylCoA_DH/ox_N_sf"/>
</dbReference>
<dbReference type="InterPro" id="IPR009100">
    <property type="entry name" value="AcylCoA_DH/oxidase_NM_dom_sf"/>
</dbReference>
<dbReference type="PANTHER" id="PTHR43884">
    <property type="entry name" value="ACYL-COA DEHYDROGENASE"/>
    <property type="match status" value="1"/>
</dbReference>
<dbReference type="PANTHER" id="PTHR43884:SF11">
    <property type="entry name" value="VERY LONG-CHAIN SPECIFIC ACYL-COA DEHYDROGENASE, MITOCHONDRIAL"/>
    <property type="match status" value="1"/>
</dbReference>
<dbReference type="Pfam" id="PF21343">
    <property type="entry name" value="ACAD9-ACADV_C"/>
    <property type="match status" value="1"/>
</dbReference>
<dbReference type="Pfam" id="PF00441">
    <property type="entry name" value="Acyl-CoA_dh_1"/>
    <property type="match status" value="1"/>
</dbReference>
<dbReference type="Pfam" id="PF02770">
    <property type="entry name" value="Acyl-CoA_dh_M"/>
    <property type="match status" value="1"/>
</dbReference>
<dbReference type="Pfam" id="PF02771">
    <property type="entry name" value="Acyl-CoA_dh_N"/>
    <property type="match status" value="1"/>
</dbReference>
<dbReference type="SUPFAM" id="SSF47203">
    <property type="entry name" value="Acyl-CoA dehydrogenase C-terminal domain-like"/>
    <property type="match status" value="1"/>
</dbReference>
<dbReference type="SUPFAM" id="SSF56645">
    <property type="entry name" value="Acyl-CoA dehydrogenase NM domain-like"/>
    <property type="match status" value="1"/>
</dbReference>
<dbReference type="PROSITE" id="PS00072">
    <property type="entry name" value="ACYL_COA_DH_1"/>
    <property type="match status" value="1"/>
</dbReference>
<dbReference type="PROSITE" id="PS00073">
    <property type="entry name" value="ACYL_COA_DH_2"/>
    <property type="match status" value="1"/>
</dbReference>
<accession>P49748</accession>
<accession>B4DEB6</accession>
<accession>F5H2A9</accession>
<accession>O76056</accession>
<accession>Q8WUL0</accession>
<keyword id="KW-0002">3D-structure</keyword>
<keyword id="KW-0007">Acetylation</keyword>
<keyword id="KW-0025">Alternative splicing</keyword>
<keyword id="KW-0122">Cardiomyopathy</keyword>
<keyword id="KW-0903">Direct protein sequencing</keyword>
<keyword id="KW-0225">Disease variant</keyword>
<keyword id="KW-0274">FAD</keyword>
<keyword id="KW-0276">Fatty acid metabolism</keyword>
<keyword id="KW-0285">Flavoprotein</keyword>
<keyword id="KW-0443">Lipid metabolism</keyword>
<keyword id="KW-0472">Membrane</keyword>
<keyword id="KW-0496">Mitochondrion</keyword>
<keyword id="KW-0999">Mitochondrion inner membrane</keyword>
<keyword id="KW-0560">Oxidoreductase</keyword>
<keyword id="KW-0597">Phosphoprotein</keyword>
<keyword id="KW-1267">Proteomics identification</keyword>
<keyword id="KW-1185">Reference proteome</keyword>
<keyword id="KW-0702">S-nitrosylation</keyword>
<keyword id="KW-0809">Transit peptide</keyword>
<proteinExistence type="evidence at protein level"/>
<feature type="transit peptide" description="Mitochondrion" evidence="7 29">
    <location>
        <begin position="1"/>
        <end position="40"/>
    </location>
</feature>
<feature type="chain" id="PRO_0000000515" description="Very long-chain specific acyl-CoA dehydrogenase, mitochondrial">
    <location>
        <begin position="41"/>
        <end position="655"/>
    </location>
</feature>
<feature type="region of interest" description="Disordered" evidence="2">
    <location>
        <begin position="23"/>
        <end position="42"/>
    </location>
</feature>
<feature type="region of interest" description="Catalytic" evidence="21">
    <location>
        <begin position="41"/>
        <end position="482"/>
    </location>
</feature>
<feature type="region of interest" description="Membrane-anchoring" evidence="21">
    <location>
        <begin position="483"/>
        <end position="516"/>
    </location>
</feature>
<feature type="active site" description="Proton acceptor" evidence="5 10 25 26">
    <location>
        <position position="462"/>
    </location>
</feature>
<feature type="binding site" evidence="5 25 26">
    <location>
        <begin position="214"/>
        <end position="223"/>
    </location>
    <ligand>
        <name>FAD</name>
        <dbReference type="ChEBI" id="CHEBI:57692"/>
    </ligand>
</feature>
<feature type="binding site" evidence="5 25 26">
    <location>
        <begin position="249"/>
        <end position="251"/>
    </location>
    <ligand>
        <name>FAD</name>
        <dbReference type="ChEBI" id="CHEBI:57692"/>
    </ligand>
</feature>
<feature type="binding site" evidence="5 25 26">
    <location>
        <begin position="461"/>
        <end position="463"/>
    </location>
    <ligand>
        <name>substrate</name>
    </ligand>
</feature>
<feature type="binding site" evidence="5 25 26">
    <location>
        <begin position="464"/>
        <end position="466"/>
    </location>
    <ligand>
        <name>FAD</name>
        <dbReference type="ChEBI" id="CHEBI:57692"/>
    </ligand>
</feature>
<feature type="binding site" evidence="5 25 26">
    <location>
        <position position="562"/>
    </location>
    <ligand>
        <name>FAD</name>
        <dbReference type="ChEBI" id="CHEBI:57692"/>
    </ligand>
</feature>
<feature type="modified residue" description="N6-acetyllysine" evidence="1">
    <location>
        <position position="51"/>
    </location>
</feature>
<feature type="modified residue" description="N6-acetyllysine; alternate" evidence="1">
    <location>
        <position position="71"/>
    </location>
</feature>
<feature type="modified residue" description="N6-succinyllysine; alternate" evidence="1">
    <location>
        <position position="71"/>
    </location>
</feature>
<feature type="modified residue" description="N6-succinyllysine" evidence="1">
    <location>
        <position position="195"/>
    </location>
</feature>
<feature type="modified residue" description="S-nitrosocysteine" evidence="1">
    <location>
        <position position="237"/>
    </location>
</feature>
<feature type="modified residue" description="N6-acetyllysine; alternate" evidence="27">
    <location>
        <position position="239"/>
    </location>
</feature>
<feature type="modified residue" description="N6-succinyllysine; alternate" evidence="1">
    <location>
        <position position="239"/>
    </location>
</feature>
<feature type="modified residue" description="N6-acetyllysine; alternate" evidence="1">
    <location>
        <position position="276"/>
    </location>
</feature>
<feature type="modified residue" description="N6-succinyllysine; alternate" evidence="1">
    <location>
        <position position="276"/>
    </location>
</feature>
<feature type="modified residue" description="N6-acetyllysine; alternate" evidence="1">
    <location>
        <position position="278"/>
    </location>
</feature>
<feature type="modified residue" description="N6-succinyllysine; alternate" evidence="1">
    <location>
        <position position="278"/>
    </location>
</feature>
<feature type="modified residue" description="N6-acetyllysine" evidence="1">
    <location>
        <position position="298"/>
    </location>
</feature>
<feature type="modified residue" description="N6-acetyllysine; alternate" evidence="27">
    <location>
        <position position="331"/>
    </location>
</feature>
<feature type="modified residue" description="N6-succinyllysine; alternate" evidence="1">
    <location>
        <position position="331"/>
    </location>
</feature>
<feature type="modified residue" description="N6-succinyllysine" evidence="1">
    <location>
        <position position="372"/>
    </location>
</feature>
<feature type="modified residue" description="N6-acetyllysine; alternate" evidence="1">
    <location>
        <position position="482"/>
    </location>
</feature>
<feature type="modified residue" description="N6-succinyllysine; alternate" evidence="1">
    <location>
        <position position="482"/>
    </location>
</feature>
<feature type="modified residue" description="Phosphoserine" evidence="28">
    <location>
        <position position="517"/>
    </location>
</feature>
<feature type="modified residue" description="Phosphoserine" evidence="28">
    <location>
        <position position="522"/>
    </location>
</feature>
<feature type="modified residue" description="N6-acetyllysine" evidence="1">
    <location>
        <position position="550"/>
    </location>
</feature>
<feature type="modified residue" description="N6-acetyllysine; alternate" evidence="1">
    <location>
        <position position="556"/>
    </location>
</feature>
<feature type="modified residue" description="N6-succinyllysine; alternate" evidence="1">
    <location>
        <position position="556"/>
    </location>
</feature>
<feature type="modified residue" description="N6-succinyllysine" evidence="1">
    <location>
        <position position="639"/>
    </location>
</feature>
<feature type="splice variant" id="VSP_046031" description="In isoform 3." evidence="15">
    <original>MQAARMAASLGRQLLRLGGG</original>
    <variation>MLGGLAAAAGTRIMGKEIEAEAQRPLRQTWRPGQPPAMTAKTM</variation>
    <location>
        <begin position="1"/>
        <end position="20"/>
    </location>
</feature>
<feature type="splice variant" id="VSP_007734" description="In isoform 2." evidence="16">
    <location>
        <begin position="47"/>
        <end position="68"/>
    </location>
</feature>
<feature type="sequence variant" id="VAR_029286" description="In dbSNP:rs2230179.">
    <original>L</original>
    <variation>F</variation>
    <location>
        <position position="17"/>
    </location>
</feature>
<feature type="sequence variant" id="VAR_000330" description="In ACADVLD; benign; dbSNP:rs2230178." evidence="14">
    <original>G</original>
    <variation>D</variation>
    <location>
        <position position="43"/>
    </location>
</feature>
<feature type="sequence variant" id="VAR_048176" description="In dbSNP:rs28934585.">
    <original>P</original>
    <variation>L</variation>
    <location>
        <position position="65"/>
    </location>
</feature>
<feature type="sequence variant" id="VAR_000331" description="In ACADVLD; dbSNP:rs387906251." evidence="3 8">
    <location>
        <position position="130"/>
    </location>
</feature>
<feature type="sequence variant" id="VAR_000332" description="In ACADVLD." evidence="14">
    <original>T</original>
    <variation>N</variation>
    <location>
        <position position="158"/>
    </location>
</feature>
<feature type="sequence variant" id="VAR_000333" description="In ACADVLD; uncertain significance; dbSNP:rs746688190." evidence="14">
    <original>Q</original>
    <variation>R</variation>
    <location>
        <position position="159"/>
    </location>
</feature>
<feature type="sequence variant" id="VAR_000334" description="In ACADVLD; dbSNP:rs369560930." evidence="14">
    <original>V</original>
    <variation>M</variation>
    <location>
        <position position="174"/>
    </location>
</feature>
<feature type="sequence variant" id="VAR_000335" description="In ACADVLD; likely pathogenic; dbSNP:rs545215807." evidence="14">
    <original>G</original>
    <variation>S</variation>
    <location>
        <position position="185"/>
    </location>
</feature>
<feature type="sequence variant" id="VAR_010101" description="In ACADVLD; likely pathogenic; dbSNP:rs140629318." evidence="3">
    <original>A</original>
    <variation>P</variation>
    <location>
        <position position="213"/>
    </location>
</feature>
<feature type="sequence variant" id="VAR_000336" description="In ACADVLD; likely pathogenic; dbSNP:rs1432183079." evidence="14">
    <original>E</original>
    <variation>K</variation>
    <location>
        <position position="218"/>
    </location>
</feature>
<feature type="sequence variant" id="VAR_000337" description="In ACADVLD." evidence="14">
    <original>L</original>
    <variation>R</variation>
    <location>
        <position position="243"/>
    </location>
</feature>
<feature type="sequence variant" id="VAR_010102" description="In ACADVLD; dbSNP:rs387906253." evidence="3">
    <original>K</original>
    <variation>E</variation>
    <location>
        <position position="247"/>
    </location>
</feature>
<feature type="sequence variant" id="VAR_000338" description="In ACADVLD." evidence="14">
    <original>K</original>
    <variation>T</variation>
    <location>
        <position position="247"/>
    </location>
</feature>
<feature type="sequence variant" id="VAR_000339" description="In ACADVLD; likely pathogenic; dbSNP:rs113994168." evidence="3 9 14">
    <original>T</original>
    <variation>M</variation>
    <location>
        <position position="260"/>
    </location>
</feature>
<feature type="sequence variant" id="VAR_000340" description="In ACADVLD." evidence="3 14">
    <location>
        <position position="278"/>
    </location>
</feature>
<feature type="sequence variant" id="VAR_000341" description="In ACADVLD." evidence="9 14">
    <original>A</original>
    <variation>D</variation>
    <location>
        <position position="281"/>
    </location>
</feature>
<feature type="sequence variant" id="VAR_000342" description="In ACADVLD; pathogenic; dbSNP:rs113994167." evidence="3 9 14">
    <original>V</original>
    <variation>A</variation>
    <location>
        <position position="283"/>
    </location>
</feature>
<feature type="sequence variant" id="VAR_000343" description="In ACADVLD; dbSNP:rs866464446." evidence="14">
    <original>G</original>
    <variation>D</variation>
    <location>
        <position position="290"/>
    </location>
</feature>
<feature type="sequence variant" id="VAR_000344" description="In ACADVLD; uncertain significance; dbSNP:rs200573371." evidence="14">
    <original>G</original>
    <variation>E</variation>
    <location>
        <position position="294"/>
    </location>
</feature>
<feature type="sequence variant" id="VAR_000345" description="In ACADVLD; dbSNP:rs774716484." evidence="14">
    <original>K</original>
    <variation>N</variation>
    <location>
        <position position="299"/>
    </location>
</feature>
<feature type="sequence variant" id="VAR_000346" description="In ACADVLD." evidence="8">
    <location>
        <position position="299"/>
    </location>
</feature>
<feature type="sequence variant" id="VAR_000347" description="In ACADVLD; dbSNP:rs398123095." evidence="9 14">
    <original>V</original>
    <variation>A</variation>
    <location>
        <position position="317"/>
    </location>
</feature>
<feature type="sequence variant" id="VAR_000348" description="In ACADVLD; dbSNP:rs2071296420." evidence="14">
    <original>M</original>
    <variation>V</variation>
    <location>
        <position position="352"/>
    </location>
</feature>
<feature type="sequence variant" id="VAR_011990" description="In dbSNP:rs1051701.">
    <original>A</original>
    <variation>S</variation>
    <location>
        <position position="359"/>
    </location>
</feature>
<feature type="sequence variant" id="VAR_000349" description="In ACADVLD; dbSNP:rs771874163." evidence="9 14">
    <original>R</original>
    <variation>C</variation>
    <location>
        <position position="366"/>
    </location>
</feature>
<feature type="sequence variant" id="VAR_000350" description="In ACADVLD; likely pathogenic; dbSNP:rs112406105." evidence="14">
    <original>R</original>
    <variation>H</variation>
    <location>
        <position position="366"/>
    </location>
</feature>
<feature type="sequence variant" id="VAR_000351" description="In ACADVLD; dbSNP:rs1057517281." evidence="9 14">
    <location>
        <position position="381"/>
    </location>
</feature>
<feature type="sequence variant" id="VAR_000352" description="In ACADVLD; likely pathogenic; dbSNP:rs118204015." evidence="8">
    <original>K</original>
    <variation>Q</variation>
    <location>
        <position position="382"/>
    </location>
</feature>
<feature type="sequence variant" id="VAR_000353" description="In ACADVLD." evidence="14">
    <original>D</original>
    <variation>H</variation>
    <location>
        <position position="405"/>
    </location>
</feature>
<feature type="sequence variant" id="VAR_000354" description="In ACADVLD; likely pathogenic; dbSNP:rs2309689." evidence="3 9 14">
    <original>G</original>
    <variation>D</variation>
    <location>
        <position position="441"/>
    </location>
</feature>
<feature type="sequence variant" id="VAR_000355" description="In ACADVLD; likely pathogenic; dbSNP:rs118204016." evidence="11 14">
    <original>R</original>
    <variation>H</variation>
    <location>
        <position position="450"/>
    </location>
</feature>
<feature type="sequence variant" id="VAR_000356" description="In ACADVLD; likely pathogenic; dbSNP:rs138058572." evidence="14">
    <original>R</original>
    <variation>Q</variation>
    <location>
        <position position="453"/>
    </location>
</feature>
<feature type="sequence variant" id="VAR_000357" description="In ACADVLD; dbSNP:rs1419606204." evidence="14">
    <original>D</original>
    <variation>N</variation>
    <location>
        <position position="454"/>
    </location>
</feature>
<feature type="sequence variant" id="VAR_000358" description="In ACADVLD; likely pathogenic; dbSNP:rs794727112." evidence="14">
    <original>R</original>
    <variation>H</variation>
    <location>
        <position position="456"/>
    </location>
</feature>
<feature type="sequence variant" id="VAR_010103" description="In ACADVLD; likely pathogenic; loss of acyl-CoA dehydrogenase activity; Loss of FAD cofactor-binding; dbSNP:rs118204017." evidence="3 10">
    <original>F</original>
    <variation>L</variation>
    <location>
        <position position="458"/>
    </location>
</feature>
<feature type="sequence variant" id="VAR_000359" description="In ACADVLD; dbSNP:rs766742117." evidence="14">
    <original>R</original>
    <variation>W</variation>
    <location>
        <position position="459"/>
    </location>
</feature>
<feature type="sequence variant" id="VAR_000360" description="In ACADVLD; dbSNP:rs200366828." evidence="14">
    <original>G</original>
    <variation>E</variation>
    <location>
        <position position="463"/>
    </location>
</feature>
<feature type="sequence variant" id="VAR_000361" description="In ACADVLD; likely pathogenic; dbSNP:rs398123083." evidence="14">
    <original>R</original>
    <variation>Q</variation>
    <location>
        <position position="469"/>
    </location>
</feature>
<feature type="sequence variant" id="VAR_000362" description="In ACADVLD; likely pathogenic; dbSNP:rs113994170." evidence="14">
    <original>R</original>
    <variation>W</variation>
    <location>
        <position position="469"/>
    </location>
</feature>
<feature type="sequence variant" id="VAR_010104" description="In ACADVLD; likely pathogenic; decreased association with mitochondrial inner membrane; may affect substrate specificity, possibly reducing the affinity for long-chain acyl-CoA substrates; dbSNP:rs759775666." evidence="3 4 13">
    <original>A</original>
    <variation>P</variation>
    <location>
        <position position="490"/>
    </location>
</feature>
<feature type="sequence variant" id="VAR_000363" description="In ACADVLD; decreased association with mitochondrial inner membrane; decreased specific activity towards several substrates in vitro." evidence="4 14">
    <original>L</original>
    <variation>P</variation>
    <location>
        <position position="502"/>
    </location>
</feature>
<feature type="sequence variant" id="VAR_010105" description="In ACADVLD; uncertain significance; dbSNP:rs2230180." evidence="3">
    <original>E</original>
    <variation>K</variation>
    <location>
        <position position="534"/>
    </location>
</feature>
<feature type="sequence variant" id="VAR_083892" description="In ACADVLD; Loss of homodimerization; loss of localization to mitochondrial inner membrane; dbSNP:rs1085307648." evidence="12">
    <original>S</original>
    <variation>W</variation>
    <location>
        <position position="583"/>
    </location>
</feature>
<feature type="sequence variant" id="VAR_000364" description="In ACADVLD." evidence="9 14">
    <original>L</original>
    <variation>I</variation>
    <location>
        <position position="602"/>
    </location>
</feature>
<feature type="sequence variant" id="VAR_000365" description="In ACADVLD; likely pathogenic; dbSNP:rs118204014." evidence="3 8 14">
    <original>R</original>
    <variation>W</variation>
    <location>
        <position position="613"/>
    </location>
</feature>
<feature type="sequence variant" id="VAR_010106" description="In ACADVLD; likely benign; dbSNP:rs148584617." evidence="3">
    <original>R</original>
    <variation>Q</variation>
    <location>
        <position position="615"/>
    </location>
</feature>
<feature type="sequence variant" id="VAR_011991" description="In dbSNP:rs13383.">
    <original>S</original>
    <variation>F</variation>
    <location>
        <position position="623"/>
    </location>
</feature>
<feature type="mutagenesis site" description="Decreased acyl-CoA dehydrogenase activity. Decreased affinity for acyl-CoA. No effect on FAD cofactor-binding." evidence="10">
    <original>F</original>
    <variation>T</variation>
    <location>
        <position position="458"/>
    </location>
</feature>
<feature type="mutagenesis site" description="Loss of acyl-CoA dehydrogenase activity. Loss of FAD cofactor-binding." evidence="10">
    <original>F</original>
    <variation>V</variation>
    <location>
        <position position="458"/>
    </location>
</feature>
<feature type="mutagenesis site" description="Decreased acyl-CoA dehydrogenase activity. No effect on affinity for acyl-CoA. Decreased FAD cofactor-binding." evidence="10">
    <original>F</original>
    <variation>Y</variation>
    <location>
        <position position="458"/>
    </location>
</feature>
<feature type="mutagenesis site" description="Decreased acyl-CoA dehydrogenase activity. No effect on affinity for acyl-CoA. No effect on FAD cofactor-binding." evidence="10">
    <original>E</original>
    <variation>D</variation>
    <location>
        <position position="462"/>
    </location>
</feature>
<feature type="mutagenesis site" description="Loss of acyl-CoA dehydrogenase activity. No effect on FAD cofactor-binding." evidence="10">
    <original>E</original>
    <variation>Q</variation>
    <location>
        <position position="462"/>
    </location>
</feature>
<feature type="mutagenesis site" description="Changed substrate specificity with decreased affinity for tetradecanoyl-CoA and hexadecanoyl-CoA." evidence="13">
    <original>A</original>
    <variation>G</variation>
    <variation>V</variation>
    <variation>S</variation>
    <variation>D</variation>
    <variation>H</variation>
    <location>
        <position position="490"/>
    </location>
</feature>
<feature type="sequence conflict" description="In Ref. 3; BAA29057." evidence="19" ref="3">
    <original>G</original>
    <variation>C</variation>
    <location>
        <position position="193"/>
    </location>
</feature>
<feature type="sequence conflict" description="In Ref. 4; BAG57027." evidence="19" ref="4">
    <original>K</original>
    <variation>E</variation>
    <location>
        <position position="200"/>
    </location>
</feature>
<feature type="sequence conflict" description="In Ref. 4; BAG57027." evidence="19" ref="4">
    <original>E</original>
    <variation>K</variation>
    <location>
        <position position="541"/>
    </location>
</feature>
<feature type="helix" evidence="30">
    <location>
        <begin position="73"/>
        <end position="78"/>
    </location>
</feature>
<feature type="turn" evidence="30">
    <location>
        <begin position="85"/>
        <end position="87"/>
    </location>
</feature>
<feature type="helix" evidence="30">
    <location>
        <begin position="96"/>
        <end position="115"/>
    </location>
</feature>
<feature type="helix" evidence="30">
    <location>
        <begin position="119"/>
        <end position="125"/>
    </location>
</feature>
<feature type="helix" evidence="30">
    <location>
        <begin position="130"/>
        <end position="138"/>
    </location>
</feature>
<feature type="turn" evidence="30">
    <location>
        <begin position="139"/>
        <end position="142"/>
    </location>
</feature>
<feature type="helix" evidence="30">
    <location>
        <begin position="148"/>
        <end position="150"/>
    </location>
</feature>
<feature type="helix" evidence="30">
    <location>
        <begin position="157"/>
        <end position="170"/>
    </location>
</feature>
<feature type="helix" evidence="30">
    <location>
        <begin position="172"/>
        <end position="182"/>
    </location>
</feature>
<feature type="turn" evidence="30">
    <location>
        <begin position="183"/>
        <end position="186"/>
    </location>
</feature>
<feature type="helix" evidence="30">
    <location>
        <begin position="187"/>
        <end position="192"/>
    </location>
</feature>
<feature type="helix" evidence="30">
    <location>
        <begin position="195"/>
        <end position="206"/>
    </location>
</feature>
<feature type="strand" evidence="30">
    <location>
        <begin position="212"/>
        <end position="215"/>
    </location>
</feature>
<feature type="strand" evidence="30">
    <location>
        <begin position="221"/>
        <end position="223"/>
    </location>
</feature>
<feature type="helix" evidence="30">
    <location>
        <begin position="225"/>
        <end position="227"/>
    </location>
</feature>
<feature type="strand" evidence="30">
    <location>
        <begin position="231"/>
        <end position="234"/>
    </location>
</feature>
<feature type="strand" evidence="30">
    <location>
        <begin position="238"/>
        <end position="251"/>
    </location>
</feature>
<feature type="turn" evidence="30">
    <location>
        <begin position="252"/>
        <end position="255"/>
    </location>
</feature>
<feature type="strand" evidence="30">
    <location>
        <begin position="257"/>
        <end position="268"/>
    </location>
</feature>
<feature type="turn" evidence="30">
    <location>
        <begin position="270"/>
        <end position="272"/>
    </location>
</feature>
<feature type="strand" evidence="30">
    <location>
        <begin position="275"/>
        <end position="285"/>
    </location>
</feature>
<feature type="helix" evidence="30">
    <location>
        <begin position="286"/>
        <end position="288"/>
    </location>
</feature>
<feature type="strand" evidence="30">
    <location>
        <begin position="289"/>
        <end position="293"/>
    </location>
</feature>
<feature type="strand" evidence="30">
    <location>
        <begin position="307"/>
        <end position="318"/>
    </location>
</feature>
<feature type="helix" evidence="30">
    <location>
        <begin position="319"/>
        <end position="321"/>
    </location>
</feature>
<feature type="strand" evidence="30">
    <location>
        <begin position="322"/>
        <end position="325"/>
    </location>
</feature>
<feature type="helix" evidence="30">
    <location>
        <begin position="329"/>
        <end position="365"/>
    </location>
</feature>
<feature type="helix" evidence="30">
    <location>
        <begin position="373"/>
        <end position="375"/>
    </location>
</feature>
<feature type="helix" evidence="30">
    <location>
        <begin position="377"/>
        <end position="405"/>
    </location>
</feature>
<feature type="helix" evidence="30">
    <location>
        <begin position="412"/>
        <end position="437"/>
    </location>
</feature>
<feature type="helix" evidence="30">
    <location>
        <begin position="439"/>
        <end position="442"/>
    </location>
</feature>
<feature type="helix" evidence="30">
    <location>
        <begin position="448"/>
        <end position="455"/>
    </location>
</feature>
<feature type="helix" evidence="30">
    <location>
        <begin position="456"/>
        <end position="459"/>
    </location>
</feature>
<feature type="strand" evidence="30">
    <location>
        <begin position="461"/>
        <end position="463"/>
    </location>
</feature>
<feature type="helix" evidence="30">
    <location>
        <begin position="465"/>
        <end position="486"/>
    </location>
</feature>
<feature type="turn" evidence="30">
    <location>
        <begin position="494"/>
        <end position="496"/>
    </location>
</feature>
<feature type="turn" evidence="30">
    <location>
        <begin position="522"/>
        <end position="524"/>
    </location>
</feature>
<feature type="helix" evidence="30">
    <location>
        <begin position="527"/>
        <end position="529"/>
    </location>
</feature>
<feature type="helix" evidence="30">
    <location>
        <begin position="530"/>
        <end position="554"/>
    </location>
</feature>
<feature type="helix" evidence="30">
    <location>
        <begin position="555"/>
        <end position="560"/>
    </location>
</feature>
<feature type="helix" evidence="30">
    <location>
        <begin position="562"/>
        <end position="591"/>
    </location>
</feature>
<feature type="helix" evidence="30">
    <location>
        <begin position="596"/>
        <end position="622"/>
    </location>
</feature>
<feature type="helix" evidence="30">
    <location>
        <begin position="627"/>
        <end position="644"/>
    </location>
</feature>
<comment type="function">
    <text evidence="5 6 7 10 12 13">Very long-chain specific acyl-CoA dehydrogenase is one of the acyl-CoA dehydrogenases that catalyze the first step of mitochondrial fatty acid beta-oxidation, an aerobic process breaking down fatty acids into acetyl-CoA and allowing the production of energy from fats (PubMed:18227065, PubMed:7668252, PubMed:9461620, PubMed:9599005, PubMed:9839948). The first step of fatty acid beta-oxidation consists in the removal of one hydrogen from C-2 and C-3 of the straight-chain fatty acyl-CoA thioester, resulting in the formation of trans-2-enoyl-CoA (PubMed:18227065, PubMed:7668252, PubMed:9461620, PubMed:9839948). Among the different mitochondrial acyl-CoA dehydrogenases, very long-chain specific acyl-CoA dehydrogenase acts specifically on acyl-CoAs with saturated 12 to 24 carbons long primary chains (PubMed:21237683, PubMed:9839948).</text>
</comment>
<comment type="catalytic activity">
    <reaction evidence="4 6 7 10 12 13">
        <text>a very-long-chain 2,3-saturated fatty acyl-CoA + oxidized [electron-transfer flavoprotein] + H(+) = a very-long-chain (2E)-enoyl-CoA + reduced [electron-transfer flavoprotein]</text>
        <dbReference type="Rhea" id="RHEA:19181"/>
        <dbReference type="Rhea" id="RHEA-COMP:10685"/>
        <dbReference type="Rhea" id="RHEA-COMP:10686"/>
        <dbReference type="ChEBI" id="CHEBI:15378"/>
        <dbReference type="ChEBI" id="CHEBI:57692"/>
        <dbReference type="ChEBI" id="CHEBI:58307"/>
        <dbReference type="ChEBI" id="CHEBI:83724"/>
        <dbReference type="ChEBI" id="CHEBI:83728"/>
        <dbReference type="EC" id="1.3.8.9"/>
    </reaction>
    <physiologicalReaction direction="left-to-right" evidence="7">
        <dbReference type="Rhea" id="RHEA:19182"/>
    </physiologicalReaction>
</comment>
<comment type="catalytic activity">
    <reaction evidence="6">
        <text>decanoyl-CoA + oxidized [electron-transfer flavoprotein] + H(+) = (2E)-decenoyl-CoA + reduced [electron-transfer flavoprotein]</text>
        <dbReference type="Rhea" id="RHEA:48176"/>
        <dbReference type="Rhea" id="RHEA-COMP:10685"/>
        <dbReference type="Rhea" id="RHEA-COMP:10686"/>
        <dbReference type="ChEBI" id="CHEBI:15378"/>
        <dbReference type="ChEBI" id="CHEBI:57692"/>
        <dbReference type="ChEBI" id="CHEBI:58307"/>
        <dbReference type="ChEBI" id="CHEBI:61406"/>
        <dbReference type="ChEBI" id="CHEBI:61430"/>
    </reaction>
    <physiologicalReaction direction="left-to-right" evidence="22">
        <dbReference type="Rhea" id="RHEA:48177"/>
    </physiologicalReaction>
</comment>
<comment type="catalytic activity">
    <reaction evidence="6 13">
        <text>dodecanoyl-CoA + oxidized [electron-transfer flavoprotein] + H(+) = (2E)-dodecenoyl-CoA + reduced [electron-transfer flavoprotein]</text>
        <dbReference type="Rhea" id="RHEA:47296"/>
        <dbReference type="Rhea" id="RHEA-COMP:10685"/>
        <dbReference type="Rhea" id="RHEA-COMP:10686"/>
        <dbReference type="ChEBI" id="CHEBI:15378"/>
        <dbReference type="ChEBI" id="CHEBI:57330"/>
        <dbReference type="ChEBI" id="CHEBI:57375"/>
        <dbReference type="ChEBI" id="CHEBI:57692"/>
        <dbReference type="ChEBI" id="CHEBI:58307"/>
    </reaction>
    <physiologicalReaction direction="left-to-right" evidence="13">
        <dbReference type="Rhea" id="RHEA:47297"/>
    </physiologicalReaction>
</comment>
<comment type="catalytic activity">
    <reaction evidence="6 13">
        <text>tetradecanoyl-CoA + oxidized [electron-transfer flavoprotein] + H(+) = (2E)-tetradecenoyl-CoA + reduced [electron-transfer flavoprotein]</text>
        <dbReference type="Rhea" id="RHEA:47316"/>
        <dbReference type="Rhea" id="RHEA-COMP:10685"/>
        <dbReference type="Rhea" id="RHEA-COMP:10686"/>
        <dbReference type="ChEBI" id="CHEBI:15378"/>
        <dbReference type="ChEBI" id="CHEBI:57385"/>
        <dbReference type="ChEBI" id="CHEBI:57692"/>
        <dbReference type="ChEBI" id="CHEBI:58307"/>
        <dbReference type="ChEBI" id="CHEBI:61405"/>
    </reaction>
    <physiologicalReaction direction="left-to-right" evidence="13">
        <dbReference type="Rhea" id="RHEA:47317"/>
    </physiologicalReaction>
</comment>
<comment type="catalytic activity">
    <reaction evidence="6 7 10 12 13">
        <text>oxidized [electron-transfer flavoprotein] + hexadecanoyl-CoA + H(+) = (2E)-hexadecenoyl-CoA + reduced [electron-transfer flavoprotein]</text>
        <dbReference type="Rhea" id="RHEA:43448"/>
        <dbReference type="Rhea" id="RHEA-COMP:10685"/>
        <dbReference type="Rhea" id="RHEA-COMP:10686"/>
        <dbReference type="ChEBI" id="CHEBI:15378"/>
        <dbReference type="ChEBI" id="CHEBI:57379"/>
        <dbReference type="ChEBI" id="CHEBI:57692"/>
        <dbReference type="ChEBI" id="CHEBI:58307"/>
        <dbReference type="ChEBI" id="CHEBI:61526"/>
    </reaction>
    <physiologicalReaction direction="left-to-right" evidence="7">
        <dbReference type="Rhea" id="RHEA:43449"/>
    </physiologicalReaction>
</comment>
<comment type="catalytic activity">
    <reaction evidence="6 13">
        <text>octadecanoyl-CoA + oxidized [electron-transfer flavoprotein] + H(+) = (2E)-octadecenoyl-CoA + reduced [electron-transfer flavoprotein]</text>
        <dbReference type="Rhea" id="RHEA:47240"/>
        <dbReference type="Rhea" id="RHEA-COMP:10685"/>
        <dbReference type="Rhea" id="RHEA-COMP:10686"/>
        <dbReference type="ChEBI" id="CHEBI:15378"/>
        <dbReference type="ChEBI" id="CHEBI:57394"/>
        <dbReference type="ChEBI" id="CHEBI:57692"/>
        <dbReference type="ChEBI" id="CHEBI:58307"/>
        <dbReference type="ChEBI" id="CHEBI:71412"/>
    </reaction>
    <physiologicalReaction direction="left-to-right" evidence="13">
        <dbReference type="Rhea" id="RHEA:47241"/>
    </physiologicalReaction>
</comment>
<comment type="catalytic activity">
    <reaction evidence="6">
        <text>eicosanoyl-CoA + oxidized [electron-transfer flavoprotein] + H(+) = (2E)-eicosenoyl-CoA + reduced [electron-transfer flavoprotein]</text>
        <dbReference type="Rhea" id="RHEA:47236"/>
        <dbReference type="Rhea" id="RHEA-COMP:10685"/>
        <dbReference type="Rhea" id="RHEA-COMP:10686"/>
        <dbReference type="ChEBI" id="CHEBI:15378"/>
        <dbReference type="ChEBI" id="CHEBI:57380"/>
        <dbReference type="ChEBI" id="CHEBI:57692"/>
        <dbReference type="ChEBI" id="CHEBI:58307"/>
        <dbReference type="ChEBI" id="CHEBI:74691"/>
    </reaction>
    <physiologicalReaction direction="left-to-right" evidence="22">
        <dbReference type="Rhea" id="RHEA:47237"/>
    </physiologicalReaction>
</comment>
<comment type="catalytic activity">
    <reaction evidence="6">
        <text>docosanoyl-CoA + oxidized [electron-transfer flavoprotein] + H(+) = (2E)-docosenoyl-CoA + reduced [electron-transfer flavoprotein]</text>
        <dbReference type="Rhea" id="RHEA:47228"/>
        <dbReference type="Rhea" id="RHEA-COMP:10685"/>
        <dbReference type="Rhea" id="RHEA-COMP:10686"/>
        <dbReference type="ChEBI" id="CHEBI:15378"/>
        <dbReference type="ChEBI" id="CHEBI:57692"/>
        <dbReference type="ChEBI" id="CHEBI:58307"/>
        <dbReference type="ChEBI" id="CHEBI:65059"/>
        <dbReference type="ChEBI" id="CHEBI:74692"/>
    </reaction>
    <physiologicalReaction direction="left-to-right" evidence="22">
        <dbReference type="Rhea" id="RHEA:47229"/>
    </physiologicalReaction>
</comment>
<comment type="catalytic activity">
    <reaction evidence="6">
        <text>tetracosanoyl-CoA + oxidized [electron-transfer flavoprotein] + H(+) = (2E)-tetracosenoyl-CoA + reduced [electron-transfer flavoprotein]</text>
        <dbReference type="Rhea" id="RHEA:47232"/>
        <dbReference type="Rhea" id="RHEA-COMP:10685"/>
        <dbReference type="Rhea" id="RHEA-COMP:10686"/>
        <dbReference type="ChEBI" id="CHEBI:15378"/>
        <dbReference type="ChEBI" id="CHEBI:57692"/>
        <dbReference type="ChEBI" id="CHEBI:58307"/>
        <dbReference type="ChEBI" id="CHEBI:65052"/>
        <dbReference type="ChEBI" id="CHEBI:74693"/>
    </reaction>
    <physiologicalReaction direction="left-to-right" evidence="22">
        <dbReference type="Rhea" id="RHEA:47233"/>
    </physiologicalReaction>
</comment>
<comment type="catalytic activity">
    <molecule>Isoform 2</molecule>
    <reaction evidence="4">
        <text>a very-long-chain 2,3-saturated fatty acyl-CoA + oxidized [electron-transfer flavoprotein] + H(+) = a very-long-chain (2E)-enoyl-CoA + reduced [electron-transfer flavoprotein]</text>
        <dbReference type="Rhea" id="RHEA:19181"/>
        <dbReference type="Rhea" id="RHEA-COMP:10685"/>
        <dbReference type="Rhea" id="RHEA-COMP:10686"/>
        <dbReference type="ChEBI" id="CHEBI:15378"/>
        <dbReference type="ChEBI" id="CHEBI:57692"/>
        <dbReference type="ChEBI" id="CHEBI:58307"/>
        <dbReference type="ChEBI" id="CHEBI:83724"/>
        <dbReference type="ChEBI" id="CHEBI:83728"/>
        <dbReference type="EC" id="1.3.8.9"/>
    </reaction>
    <physiologicalReaction direction="left-to-right" evidence="20">
        <dbReference type="Rhea" id="RHEA:19182"/>
    </physiologicalReaction>
</comment>
<comment type="catalytic activity">
    <molecule>Isoform 2</molecule>
    <reaction evidence="4">
        <text>tetradecanoyl-CoA + oxidized [electron-transfer flavoprotein] + H(+) = (2E)-tetradecenoyl-CoA + reduced [electron-transfer flavoprotein]</text>
        <dbReference type="Rhea" id="RHEA:47316"/>
        <dbReference type="Rhea" id="RHEA-COMP:10685"/>
        <dbReference type="Rhea" id="RHEA-COMP:10686"/>
        <dbReference type="ChEBI" id="CHEBI:15378"/>
        <dbReference type="ChEBI" id="CHEBI:57385"/>
        <dbReference type="ChEBI" id="CHEBI:57692"/>
        <dbReference type="ChEBI" id="CHEBI:58307"/>
        <dbReference type="ChEBI" id="CHEBI:61405"/>
    </reaction>
    <physiologicalReaction direction="left-to-right" evidence="20">
        <dbReference type="Rhea" id="RHEA:47317"/>
    </physiologicalReaction>
</comment>
<comment type="catalytic activity">
    <molecule>Isoform 2</molecule>
    <reaction evidence="4">
        <text>oxidized [electron-transfer flavoprotein] + hexadecanoyl-CoA + H(+) = (2E)-hexadecenoyl-CoA + reduced [electron-transfer flavoprotein]</text>
        <dbReference type="Rhea" id="RHEA:43448"/>
        <dbReference type="Rhea" id="RHEA-COMP:10685"/>
        <dbReference type="Rhea" id="RHEA-COMP:10686"/>
        <dbReference type="ChEBI" id="CHEBI:15378"/>
        <dbReference type="ChEBI" id="CHEBI:57379"/>
        <dbReference type="ChEBI" id="CHEBI:57692"/>
        <dbReference type="ChEBI" id="CHEBI:58307"/>
        <dbReference type="ChEBI" id="CHEBI:61526"/>
    </reaction>
    <physiologicalReaction direction="left-to-right" evidence="20">
        <dbReference type="Rhea" id="RHEA:43449"/>
    </physiologicalReaction>
</comment>
<comment type="catalytic activity">
    <molecule>Isoform 2</molecule>
    <reaction evidence="4">
        <text>(9Z)-hexadecenoyl-CoA + oxidized [electron-transfer flavoprotein] + H(+) = (2E,9Z)-hexadecadienoyl-CoA + reduced [electron-transfer flavoprotein]</text>
        <dbReference type="Rhea" id="RHEA:47304"/>
        <dbReference type="Rhea" id="RHEA-COMP:10685"/>
        <dbReference type="Rhea" id="RHEA-COMP:10686"/>
        <dbReference type="ChEBI" id="CHEBI:15378"/>
        <dbReference type="ChEBI" id="CHEBI:57692"/>
        <dbReference type="ChEBI" id="CHEBI:58307"/>
        <dbReference type="ChEBI" id="CHEBI:61540"/>
        <dbReference type="ChEBI" id="CHEBI:77549"/>
    </reaction>
    <physiologicalReaction direction="left-to-right" evidence="20">
        <dbReference type="Rhea" id="RHEA:47305"/>
    </physiologicalReaction>
</comment>
<comment type="catalytic activity">
    <molecule>Isoform 2</molecule>
    <reaction evidence="4">
        <text>octadecanoyl-CoA + oxidized [electron-transfer flavoprotein] + H(+) = (2E)-octadecenoyl-CoA + reduced [electron-transfer flavoprotein]</text>
        <dbReference type="Rhea" id="RHEA:47240"/>
        <dbReference type="Rhea" id="RHEA-COMP:10685"/>
        <dbReference type="Rhea" id="RHEA-COMP:10686"/>
        <dbReference type="ChEBI" id="CHEBI:15378"/>
        <dbReference type="ChEBI" id="CHEBI:57394"/>
        <dbReference type="ChEBI" id="CHEBI:57692"/>
        <dbReference type="ChEBI" id="CHEBI:58307"/>
        <dbReference type="ChEBI" id="CHEBI:71412"/>
    </reaction>
    <physiologicalReaction direction="left-to-right" evidence="20">
        <dbReference type="Rhea" id="RHEA:47241"/>
    </physiologicalReaction>
</comment>
<comment type="catalytic activity">
    <molecule>Isoform 2</molecule>
    <reaction evidence="4">
        <text>oxidized [electron-transfer flavoprotein] + (9Z)-octadecenoyl-CoA + H(+) = (2E,9Z)-octadecadienoyl-CoA + reduced [electron-transfer flavoprotein]</text>
        <dbReference type="Rhea" id="RHEA:47300"/>
        <dbReference type="Rhea" id="RHEA-COMP:10685"/>
        <dbReference type="Rhea" id="RHEA-COMP:10686"/>
        <dbReference type="ChEBI" id="CHEBI:15378"/>
        <dbReference type="ChEBI" id="CHEBI:57387"/>
        <dbReference type="ChEBI" id="CHEBI:57692"/>
        <dbReference type="ChEBI" id="CHEBI:58307"/>
        <dbReference type="ChEBI" id="CHEBI:77553"/>
    </reaction>
    <physiologicalReaction direction="left-to-right" evidence="20">
        <dbReference type="Rhea" id="RHEA:47301"/>
    </physiologicalReaction>
</comment>
<comment type="catalytic activity">
    <molecule>Isoform 2</molecule>
    <reaction evidence="4">
        <text>eicosanoyl-CoA + oxidized [electron-transfer flavoprotein] + H(+) = (2E)-eicosenoyl-CoA + reduced [electron-transfer flavoprotein]</text>
        <dbReference type="Rhea" id="RHEA:47236"/>
        <dbReference type="Rhea" id="RHEA-COMP:10685"/>
        <dbReference type="Rhea" id="RHEA-COMP:10686"/>
        <dbReference type="ChEBI" id="CHEBI:15378"/>
        <dbReference type="ChEBI" id="CHEBI:57380"/>
        <dbReference type="ChEBI" id="CHEBI:57692"/>
        <dbReference type="ChEBI" id="CHEBI:58307"/>
        <dbReference type="ChEBI" id="CHEBI:74691"/>
    </reaction>
    <physiologicalReaction direction="left-to-right" evidence="20">
        <dbReference type="Rhea" id="RHEA:47237"/>
    </physiologicalReaction>
</comment>
<comment type="cofactor">
    <cofactor evidence="5 10">
        <name>FAD</name>
        <dbReference type="ChEBI" id="CHEBI:57692"/>
    </cofactor>
</comment>
<comment type="biophysicochemical properties">
    <kinetics>
        <KM evidence="10">4.4 uM for hexadecanoyl-CoA</KM>
    </kinetics>
</comment>
<comment type="pathway">
    <text evidence="7 12 13">Lipid metabolism; mitochondrial fatty acid beta-oxidation.</text>
</comment>
<comment type="subunit">
    <text evidence="4 5 10 12">Homodimer (PubMed:17374501, PubMed:18227065, PubMed:9461620, PubMed:9599005). Homodimerizes after import into the mitochondrion (PubMed:9599005).</text>
</comment>
<comment type="interaction">
    <interactant intactId="EBI-727618">
        <id>P49748</id>
    </interactant>
    <interactant intactId="EBI-1560239">
        <id>Q53T94</id>
        <label>TAF1B</label>
    </interactant>
    <organismsDiffer>false</organismsDiffer>
    <experiments>3</experiments>
</comment>
<comment type="subcellular location">
    <subcellularLocation>
        <location evidence="10 12">Mitochondrion inner membrane</location>
        <topology evidence="12">Peripheral membrane protein</topology>
    </subcellularLocation>
</comment>
<comment type="subcellular location">
    <molecule>Isoform 2</molecule>
    <subcellularLocation>
        <location evidence="4">Mitochondrion inner membrane</location>
        <topology evidence="4">Peripheral membrane protein</topology>
    </subcellularLocation>
</comment>
<comment type="alternative products">
    <event type="alternative splicing"/>
    <isoform>
        <id>P49748-1</id>
        <name>1</name>
        <sequence type="displayed"/>
    </isoform>
    <isoform>
        <id>P49748-2</id>
        <name>2</name>
        <name evidence="17">DeltaEx3 VLCAD</name>
        <sequence type="described" ref="VSP_007734"/>
    </isoform>
    <isoform>
        <id>P49748-3</id>
        <name>3</name>
        <sequence type="described" ref="VSP_046031"/>
    </isoform>
</comment>
<comment type="tissue specificity">
    <text evidence="9">Predominantly expressed in heart and skeletal muscle (at protein level). Also detected in kidney and liver (at protein level).</text>
</comment>
<comment type="PTM">
    <text evidence="1">S-nitrosylation at Cys-237 in liver improves catalytic efficiency.</text>
</comment>
<comment type="disease" evidence="3 4 7 8 9 10 11 12 13 14">
    <disease id="DI-02411">
        <name>Acyl-CoA dehydrogenase very long-chain deficiency</name>
        <acronym>ACADVLD</acronym>
        <description>An inborn error of mitochondrial fatty acid beta-oxidation which leads to impaired long-chain fatty acid beta-oxidation. It is clinically heterogeneous, with three major phenotypes: a severe childhood form characterized by early onset, high mortality and high incidence of cardiomyopathy; a milder childhood form with later onset, characterized by hypoketotic hypoglycemia, low mortality and rare cardiomyopathy; an adult form, with isolated skeletal muscle involvement, rhabdomyolysis and myoglobinuria, usually triggered by exercise or fasting.</description>
        <dbReference type="MIM" id="201475"/>
    </disease>
    <text>The disease is caused by variants affecting the gene represented in this entry.</text>
</comment>
<comment type="similarity">
    <text evidence="19">Belongs to the acyl-CoA dehydrogenase family.</text>
</comment>
<gene>
    <name evidence="24" type="primary">ACADVL</name>
    <name evidence="18" type="synonym">VLCAD</name>
</gene>
<reference key="1">
    <citation type="journal article" date="1995" name="Am. J. Hum. Genet.">
        <title>Cloning of human very-long-chain acyl-coenzyme A dehydrogenase and molecular characterization of its deficiency in two patients.</title>
        <authorList>
            <person name="Aoyama T."/>
            <person name="Souri M."/>
            <person name="Ueno I."/>
            <person name="Kamijo T."/>
            <person name="Yamaguchi S."/>
            <person name="Rhead W.J."/>
            <person name="Tanaka K."/>
            <person name="Hashimoto T."/>
        </authorList>
    </citation>
    <scope>NUCLEOTIDE SEQUENCE [MRNA] (ISOFORM 1)</scope>
    <scope>PARTIAL PROTEIN SEQUENCE</scope>
    <scope>FUNCTION</scope>
    <scope>CATALYTIC ACTIVITY</scope>
    <scope>PATHWAY</scope>
    <scope>INVOLVEMENT IN ACADVLD</scope>
    <scope>TRANSIT PEPTIDE</scope>
</reference>
<reference key="2">
    <citation type="journal article" date="1996" name="Hum. Mol. Genet.">
        <title>Cloning and characterization of human very-long-chain acyl-CoA dehydrogenase cDNA, chromosomal assignment of the gene and identification in four patients of nine different mutations within the VLCAD gene.</title>
        <authorList>
            <person name="Andresen B.S."/>
            <person name="Bross P."/>
            <person name="Vianey-Saban C."/>
            <person name="Divry P."/>
            <person name="Zabot M.-T."/>
            <person name="Roe C.R."/>
            <person name="Nada M.A."/>
            <person name="Byskov A."/>
            <person name="Kruse T.A."/>
            <person name="Neve S."/>
            <person name="Kristiansen K."/>
            <person name="Knudsen I."/>
            <person name="Corydon M.J."/>
            <person name="Gregersen N."/>
        </authorList>
    </citation>
    <scope>NUCLEOTIDE SEQUENCE [MRNA] (ISOFORM 1)</scope>
    <scope>TISSUE SPECIFICITY</scope>
    <scope>VARIANTS ACADVLD MET-260; ASP-281; ALA-283; ALA-317; CYS-366; GLU-381 DEL; ASP-441 AND ILE-602</scope>
    <source>
        <tissue>Placenta</tissue>
    </source>
</reference>
<reference key="3">
    <citation type="journal article" date="1995" name="Biochem. Biophys. Res. Commun.">
        <title>Genomic DNA organization of human mitochondrial very-long-chain acyl-CoA dehydrogenase and mutation analysis.</title>
        <authorList>
            <person name="Orii K.O."/>
            <person name="Aoyama T."/>
            <person name="Souri M."/>
            <person name="Orii K.E."/>
            <person name="Kondo N."/>
            <person name="Orii T."/>
            <person name="Hashimoto T."/>
        </authorList>
    </citation>
    <scope>NUCLEOTIDE SEQUENCE [GENOMIC DNA] (ISOFORM 1)</scope>
    <source>
        <tissue>Peripheral blood</tissue>
    </source>
</reference>
<reference key="4">
    <citation type="journal article" date="2004" name="Nat. Genet.">
        <title>Complete sequencing and characterization of 21,243 full-length human cDNAs.</title>
        <authorList>
            <person name="Ota T."/>
            <person name="Suzuki Y."/>
            <person name="Nishikawa T."/>
            <person name="Otsuki T."/>
            <person name="Sugiyama T."/>
            <person name="Irie R."/>
            <person name="Wakamatsu A."/>
            <person name="Hayashi K."/>
            <person name="Sato H."/>
            <person name="Nagai K."/>
            <person name="Kimura K."/>
            <person name="Makita H."/>
            <person name="Sekine M."/>
            <person name="Obayashi M."/>
            <person name="Nishi T."/>
            <person name="Shibahara T."/>
            <person name="Tanaka T."/>
            <person name="Ishii S."/>
            <person name="Yamamoto J."/>
            <person name="Saito K."/>
            <person name="Kawai Y."/>
            <person name="Isono Y."/>
            <person name="Nakamura Y."/>
            <person name="Nagahari K."/>
            <person name="Murakami K."/>
            <person name="Yasuda T."/>
            <person name="Iwayanagi T."/>
            <person name="Wagatsuma M."/>
            <person name="Shiratori A."/>
            <person name="Sudo H."/>
            <person name="Hosoiri T."/>
            <person name="Kaku Y."/>
            <person name="Kodaira H."/>
            <person name="Kondo H."/>
            <person name="Sugawara M."/>
            <person name="Takahashi M."/>
            <person name="Kanda K."/>
            <person name="Yokoi T."/>
            <person name="Furuya T."/>
            <person name="Kikkawa E."/>
            <person name="Omura Y."/>
            <person name="Abe K."/>
            <person name="Kamihara K."/>
            <person name="Katsuta N."/>
            <person name="Sato K."/>
            <person name="Tanikawa M."/>
            <person name="Yamazaki M."/>
            <person name="Ninomiya K."/>
            <person name="Ishibashi T."/>
            <person name="Yamashita H."/>
            <person name="Murakawa K."/>
            <person name="Fujimori K."/>
            <person name="Tanai H."/>
            <person name="Kimata M."/>
            <person name="Watanabe M."/>
            <person name="Hiraoka S."/>
            <person name="Chiba Y."/>
            <person name="Ishida S."/>
            <person name="Ono Y."/>
            <person name="Takiguchi S."/>
            <person name="Watanabe S."/>
            <person name="Yosida M."/>
            <person name="Hotuta T."/>
            <person name="Kusano J."/>
            <person name="Kanehori K."/>
            <person name="Takahashi-Fujii A."/>
            <person name="Hara H."/>
            <person name="Tanase T.-O."/>
            <person name="Nomura Y."/>
            <person name="Togiya S."/>
            <person name="Komai F."/>
            <person name="Hara R."/>
            <person name="Takeuchi K."/>
            <person name="Arita M."/>
            <person name="Imose N."/>
            <person name="Musashino K."/>
            <person name="Yuuki H."/>
            <person name="Oshima A."/>
            <person name="Sasaki N."/>
            <person name="Aotsuka S."/>
            <person name="Yoshikawa Y."/>
            <person name="Matsunawa H."/>
            <person name="Ichihara T."/>
            <person name="Shiohata N."/>
            <person name="Sano S."/>
            <person name="Moriya S."/>
            <person name="Momiyama H."/>
            <person name="Satoh N."/>
            <person name="Takami S."/>
            <person name="Terashima Y."/>
            <person name="Suzuki O."/>
            <person name="Nakagawa S."/>
            <person name="Senoh A."/>
            <person name="Mizoguchi H."/>
            <person name="Goto Y."/>
            <person name="Shimizu F."/>
            <person name="Wakebe H."/>
            <person name="Hishigaki H."/>
            <person name="Watanabe T."/>
            <person name="Sugiyama A."/>
            <person name="Takemoto M."/>
            <person name="Kawakami B."/>
            <person name="Yamazaki M."/>
            <person name="Watanabe K."/>
            <person name="Kumagai A."/>
            <person name="Itakura S."/>
            <person name="Fukuzumi Y."/>
            <person name="Fujimori Y."/>
            <person name="Komiyama M."/>
            <person name="Tashiro H."/>
            <person name="Tanigami A."/>
            <person name="Fujiwara T."/>
            <person name="Ono T."/>
            <person name="Yamada K."/>
            <person name="Fujii Y."/>
            <person name="Ozaki K."/>
            <person name="Hirao M."/>
            <person name="Ohmori Y."/>
            <person name="Kawabata A."/>
            <person name="Hikiji T."/>
            <person name="Kobatake N."/>
            <person name="Inagaki H."/>
            <person name="Ikema Y."/>
            <person name="Okamoto S."/>
            <person name="Okitani R."/>
            <person name="Kawakami T."/>
            <person name="Noguchi S."/>
            <person name="Itoh T."/>
            <person name="Shigeta K."/>
            <person name="Senba T."/>
            <person name="Matsumura K."/>
            <person name="Nakajima Y."/>
            <person name="Mizuno T."/>
            <person name="Morinaga M."/>
            <person name="Sasaki M."/>
            <person name="Togashi T."/>
            <person name="Oyama M."/>
            <person name="Hata H."/>
            <person name="Watanabe M."/>
            <person name="Komatsu T."/>
            <person name="Mizushima-Sugano J."/>
            <person name="Satoh T."/>
            <person name="Shirai Y."/>
            <person name="Takahashi Y."/>
            <person name="Nakagawa K."/>
            <person name="Okumura K."/>
            <person name="Nagase T."/>
            <person name="Nomura N."/>
            <person name="Kikuchi H."/>
            <person name="Masuho Y."/>
            <person name="Yamashita R."/>
            <person name="Nakai K."/>
            <person name="Yada T."/>
            <person name="Nakamura Y."/>
            <person name="Ohara O."/>
            <person name="Isogai T."/>
            <person name="Sugano S."/>
        </authorList>
    </citation>
    <scope>NUCLEOTIDE SEQUENCE [LARGE SCALE MRNA] (ISOFORM 3)</scope>
    <source>
        <tissue>Cerebellum</tissue>
    </source>
</reference>
<reference key="5">
    <citation type="journal article" date="2006" name="Nature">
        <title>DNA sequence of human chromosome 17 and analysis of rearrangement in the human lineage.</title>
        <authorList>
            <person name="Zody M.C."/>
            <person name="Garber M."/>
            <person name="Adams D.J."/>
            <person name="Sharpe T."/>
            <person name="Harrow J."/>
            <person name="Lupski J.R."/>
            <person name="Nicholson C."/>
            <person name="Searle S.M."/>
            <person name="Wilming L."/>
            <person name="Young S.K."/>
            <person name="Abouelleil A."/>
            <person name="Allen N.R."/>
            <person name="Bi W."/>
            <person name="Bloom T."/>
            <person name="Borowsky M.L."/>
            <person name="Bugalter B.E."/>
            <person name="Butler J."/>
            <person name="Chang J.L."/>
            <person name="Chen C.-K."/>
            <person name="Cook A."/>
            <person name="Corum B."/>
            <person name="Cuomo C.A."/>
            <person name="de Jong P.J."/>
            <person name="DeCaprio D."/>
            <person name="Dewar K."/>
            <person name="FitzGerald M."/>
            <person name="Gilbert J."/>
            <person name="Gibson R."/>
            <person name="Gnerre S."/>
            <person name="Goldstein S."/>
            <person name="Grafham D.V."/>
            <person name="Grocock R."/>
            <person name="Hafez N."/>
            <person name="Hagopian D.S."/>
            <person name="Hart E."/>
            <person name="Norman C.H."/>
            <person name="Humphray S."/>
            <person name="Jaffe D.B."/>
            <person name="Jones M."/>
            <person name="Kamal M."/>
            <person name="Khodiyar V.K."/>
            <person name="LaButti K."/>
            <person name="Laird G."/>
            <person name="Lehoczky J."/>
            <person name="Liu X."/>
            <person name="Lokyitsang T."/>
            <person name="Loveland J."/>
            <person name="Lui A."/>
            <person name="Macdonald P."/>
            <person name="Major J.E."/>
            <person name="Matthews L."/>
            <person name="Mauceli E."/>
            <person name="McCarroll S.A."/>
            <person name="Mihalev A.H."/>
            <person name="Mudge J."/>
            <person name="Nguyen C."/>
            <person name="Nicol R."/>
            <person name="O'Leary S.B."/>
            <person name="Osoegawa K."/>
            <person name="Schwartz D.C."/>
            <person name="Shaw-Smith C."/>
            <person name="Stankiewicz P."/>
            <person name="Steward C."/>
            <person name="Swarbreck D."/>
            <person name="Venkataraman V."/>
            <person name="Whittaker C.A."/>
            <person name="Yang X."/>
            <person name="Zimmer A.R."/>
            <person name="Bradley A."/>
            <person name="Hubbard T."/>
            <person name="Birren B.W."/>
            <person name="Rogers J."/>
            <person name="Lander E.S."/>
            <person name="Nusbaum C."/>
        </authorList>
    </citation>
    <scope>NUCLEOTIDE SEQUENCE [LARGE SCALE GENOMIC DNA]</scope>
</reference>
<reference key="6">
    <citation type="journal article" date="2004" name="Genome Res.">
        <title>The status, quality, and expansion of the NIH full-length cDNA project: the Mammalian Gene Collection (MGC).</title>
        <authorList>
            <consortium name="The MGC Project Team"/>
        </authorList>
    </citation>
    <scope>NUCLEOTIDE SEQUENCE [LARGE SCALE MRNA] (ISOFORMS 1 AND 2)</scope>
    <source>
        <tissue>Liver</tissue>
        <tissue>Lung</tissue>
        <tissue>Pancreas</tissue>
    </source>
</reference>
<reference key="7">
    <citation type="journal article" date="1995" name="J. Clin. Invest.">
        <title>Purification of human very-long-chain acyl-coenzyme A dehydrogenase and characterization of its deficiency in seven patients.</title>
        <authorList>
            <person name="Aoyama T."/>
            <person name="Souri M."/>
            <person name="Ushikubo S."/>
            <person name="Kamijo T."/>
            <person name="Yamaguchi S."/>
            <person name="Kelley R.I."/>
            <person name="Rhead W.J."/>
            <person name="Uetake K."/>
            <person name="Tanaka K."/>
            <person name="Hashimoto T."/>
        </authorList>
    </citation>
    <scope>CHARACTERIZATION</scope>
</reference>
<reference key="8">
    <citation type="journal article" date="1998" name="J. Biol. Chem.">
        <title>Catalytic and FAD-binding residues of mitochondrial very long chain acyl-coenzyme A dehydrogenase.</title>
        <authorList>
            <person name="Souri M."/>
            <person name="Aoyama T."/>
            <person name="Cox G.F."/>
            <person name="Hashimoto T."/>
        </authorList>
    </citation>
    <scope>FUNCTION</scope>
    <scope>CATALYTIC ACTIVITY</scope>
    <scope>COFACTOR</scope>
    <scope>BIOPHYSICOCHEMICAL PROPERTIES</scope>
    <scope>SUBUNIT</scope>
    <scope>SUBCELLULAR LOCATION</scope>
    <scope>MUTAGENESIS OF PHE-458 AND GLU-462</scope>
    <scope>ACTIVE SITE</scope>
    <scope>CHARACTERIZATION OF VARIANT ACADVLD LEU-458</scope>
</reference>
<reference key="9">
    <citation type="journal article" date="1999" name="Am. J. Hum. Genet.">
        <title>Clear correlation of genotype with disease phenotype in very-long-chain acyl-CoA dehydrogenase deficiency.</title>
        <authorList>
            <person name="Andresen B.S."/>
            <person name="Olpin S."/>
            <person name="Poorthuis B.J.H.M."/>
            <person name="Scholte H.R."/>
            <person name="Vianey-Saban C."/>
            <person name="Wanders R."/>
            <person name="Ijlst L."/>
            <person name="Morris A."/>
            <person name="Pourfarzam M."/>
            <person name="Bartlett K."/>
            <person name="Baumgartner E.R."/>
            <person name="de Klerk J.B.C."/>
            <person name="Schroeder L.D."/>
            <person name="Corydon T.J."/>
            <person name="Lund H."/>
            <person name="Winter V."/>
            <person name="Bross P."/>
            <person name="Bolund L."/>
            <person name="Gregersen N."/>
        </authorList>
    </citation>
    <scope>VARIANTS ACADVLD ASP-43; ASN-158; ARG-159; MET-174; SER-185; LYS-218; ARG-243; THR-247; MET-260; LYS-278 DEL; ASP-281; ALA-283; ASP-290; GLU-294; ASN-299; ALA-317; VAL-352; CYS-366; HIS-366; GLU-381 DEL; HIS-405; ASP-441; HIS-450; GLN-453; ASN-454; HIS-456; TRP-459; GLU-463; GLN-469; TRP-469; PRO-502; ILE-602 AND TRP-613</scope>
</reference>
<reference key="10">
    <citation type="journal article" date="2007" name="Mol. Genet. Metab.">
        <title>Expression and characterization of mutations in human very long-chain acyl-CoA dehydrogenase using a prokaryotic system.</title>
        <authorList>
            <person name="Goetzman E.S."/>
            <person name="Wang Y."/>
            <person name="He M."/>
            <person name="Mohsen A.W."/>
            <person name="Ninness B.K."/>
            <person name="Vockley J."/>
        </authorList>
    </citation>
    <scope>CATALYTIC ACTIVITY (ISOFORM 2)</scope>
    <scope>SUBCELLULAR LOCATION (ISOFORM 2)</scope>
    <scope>TOPOLOGY (ISOFORM 2)</scope>
    <scope>CHARACTERIZATION OF VARIANTS ACADVLD PRO-490 AND PRO-502</scope>
    <scope>HOMODIMERIZATION</scope>
</reference>
<reference key="11">
    <citation type="journal article" date="2009" name="Science">
        <title>Lysine acetylation targets protein complexes and co-regulates major cellular functions.</title>
        <authorList>
            <person name="Choudhary C."/>
            <person name="Kumar C."/>
            <person name="Gnad F."/>
            <person name="Nielsen M.L."/>
            <person name="Rehman M."/>
            <person name="Walther T.C."/>
            <person name="Olsen J.V."/>
            <person name="Mann M."/>
        </authorList>
    </citation>
    <scope>ACETYLATION [LARGE SCALE ANALYSIS] AT LYS-239 AND LYS-331</scope>
    <scope>IDENTIFICATION BY MASS SPECTROMETRY [LARGE SCALE ANALYSIS]</scope>
</reference>
<reference key="12">
    <citation type="journal article" date="2011" name="BMC Syst. Biol.">
        <title>Initial characterization of the human central proteome.</title>
        <authorList>
            <person name="Burkard T.R."/>
            <person name="Planyavsky M."/>
            <person name="Kaupe I."/>
            <person name="Breitwieser F.P."/>
            <person name="Buerckstuemmer T."/>
            <person name="Bennett K.L."/>
            <person name="Superti-Furga G."/>
            <person name="Colinge J."/>
        </authorList>
    </citation>
    <scope>IDENTIFICATION BY MASS SPECTROMETRY [LARGE SCALE ANALYSIS]</scope>
</reference>
<reference key="13">
    <citation type="journal article" date="2011" name="Mol. Genet. Metab.">
        <title>Identification and characterization of new long chain acyl-CoA dehydrogenases.</title>
        <authorList>
            <person name="He M."/>
            <person name="Pei Z."/>
            <person name="Mohsen A.W."/>
            <person name="Watkins P."/>
            <person name="Murdoch G."/>
            <person name="Van Veldhoven P.P."/>
            <person name="Ensenauer R."/>
            <person name="Vockley J."/>
        </authorList>
    </citation>
    <scope>CATALYTIC ACTIVITY</scope>
    <scope>SUBSTRATE SPECIFICITY</scope>
</reference>
<reference key="14">
    <citation type="journal article" date="2013" name="J. Proteome Res.">
        <title>Toward a comprehensive characterization of a human cancer cell phosphoproteome.</title>
        <authorList>
            <person name="Zhou H."/>
            <person name="Di Palma S."/>
            <person name="Preisinger C."/>
            <person name="Peng M."/>
            <person name="Polat A.N."/>
            <person name="Heck A.J."/>
            <person name="Mohammed S."/>
        </authorList>
    </citation>
    <scope>PHOSPHORYLATION [LARGE SCALE ANALYSIS] AT SER-517 AND SER-522</scope>
    <scope>IDENTIFICATION BY MASS SPECTROMETRY [LARGE SCALE ANALYSIS]</scope>
    <source>
        <tissue>Erythroleukemia</tissue>
    </source>
</reference>
<reference key="15">
    <citation type="journal article" date="2014" name="J. Proteomics">
        <title>An enzyme assisted RP-RPLC approach for in-depth analysis of human liver phosphoproteome.</title>
        <authorList>
            <person name="Bian Y."/>
            <person name="Song C."/>
            <person name="Cheng K."/>
            <person name="Dong M."/>
            <person name="Wang F."/>
            <person name="Huang J."/>
            <person name="Sun D."/>
            <person name="Wang L."/>
            <person name="Ye M."/>
            <person name="Zou H."/>
        </authorList>
    </citation>
    <scope>IDENTIFICATION BY MASS SPECTROMETRY [LARGE SCALE ANALYSIS]</scope>
    <source>
        <tissue>Liver</tissue>
    </source>
</reference>
<reference key="16">
    <citation type="journal article" date="2015" name="Proteomics">
        <title>N-terminome analysis of the human mitochondrial proteome.</title>
        <authorList>
            <person name="Vaca Jacome A.S."/>
            <person name="Rabilloud T."/>
            <person name="Schaeffer-Reiss C."/>
            <person name="Rompais M."/>
            <person name="Ayoub D."/>
            <person name="Lane L."/>
            <person name="Bairoch A."/>
            <person name="Van Dorsselaer A."/>
            <person name="Carapito C."/>
        </authorList>
    </citation>
    <scope>CLEAVAGE OF TRANSIT PEPTIDE [LARGE SCALE ANALYSIS] AFTER TYR-40</scope>
    <scope>IDENTIFICATION BY MASS SPECTROMETRY [LARGE SCALE ANALYSIS]</scope>
</reference>
<reference evidence="25" key="17">
    <citation type="submission" date="2007-03" db="PDB data bank">
        <title>Crystal Structure of Human Very Long Chain Acyl- Coa Dehydrogenase (Acadvl).</title>
        <authorList>
            <person name="Pike A.C.W."/>
            <person name="Hozjan V."/>
            <person name="Smee C."/>
            <person name="Berridge G."/>
            <person name="Burgess N."/>
            <person name="Salah E."/>
            <person name="Bunkoczi G."/>
            <person name="Uppenberg J."/>
            <person name="Ugochukwu E."/>
            <person name="von Delft F."/>
            <person name="Arrowsmith C.H."/>
            <person name="Edwards A."/>
            <person name="Weigelt J."/>
            <person name="Sundstrom M."/>
            <person name="Oppermann U."/>
        </authorList>
    </citation>
    <scope>X-RAY CRYSTALLOGRAPHY (1.45 ANGSTROMS) OF 69-655 IN COMPLEX WITH FAD AND SUBSTRATE ANALOG</scope>
</reference>
<reference evidence="26" key="18">
    <citation type="journal article" date="2008" name="J. Biol. Chem.">
        <title>Structural basis for substrate fatty acyl chain specificity: crystal structure of human very-long-chain acyl-CoA dehydrogenase.</title>
        <authorList>
            <person name="McAndrew R.P."/>
            <person name="Wang Y."/>
            <person name="Mohsen A.W."/>
            <person name="He M."/>
            <person name="Vockley J."/>
            <person name="Kim J.J."/>
        </authorList>
    </citation>
    <scope>X-RAY CRYSTALLOGRAPHY (1.91 ANGSTROMS) OF 69-655 IN COMPLEX WITH TETRADECANOYL-COA AND FAD</scope>
    <scope>FUNCTION</scope>
    <scope>SUBUNIT</scope>
    <scope>COFACTOR</scope>
    <scope>ACTIVE SITE</scope>
</reference>
<reference key="19">
    <citation type="journal article" date="1996" name="Am. J. Hum. Genet.">
        <title>Mutation analysis of very-long-chain acyl-coenzyme A dehydrogenase (VLCAD) deficiency: identification and characterization of mutant VLCAD cDNAs from four patients.</title>
        <authorList>
            <person name="Souri M."/>
            <person name="Aoyama T."/>
            <person name="Orii K."/>
            <person name="Yamaguchi S."/>
            <person name="Hashimoto T."/>
        </authorList>
    </citation>
    <scope>VARIANTS ACADVLD GLU-130 DEL; LYS-299 DEL; GLN-382 AND TRP-613</scope>
</reference>
<reference key="20">
    <citation type="journal article" date="1998" name="Ann. Neurol.">
        <title>Very long chain acyl-coenzyme A dehydrogenase deficiency with adult onset.</title>
        <authorList>
            <person name="Smelt A.H."/>
            <person name="Poorthuis B.J.H.M."/>
            <person name="Onkenhout W."/>
            <person name="Scholte H.R."/>
            <person name="Andresen B.S."/>
            <person name="van Duinen S.G."/>
            <person name="Gregersen N."/>
            <person name="Wintzen A.R."/>
        </authorList>
    </citation>
    <scope>VARIANT ACADVLD HIS-450</scope>
</reference>
<reference key="21">
    <citation type="journal article" date="1998" name="Eur. J. Biochem.">
        <title>Relationship between structure and substrate-chain-length specificity of mitochondrial very-long-chain acyl-coenzyme A dehydrogenase.</title>
        <authorList>
            <person name="Souri M."/>
            <person name="Aoyama T."/>
            <person name="Yamaguchi S."/>
            <person name="Hashimoto T."/>
        </authorList>
    </citation>
    <scope>VARIANT ACADVLD PRO-490</scope>
    <scope>CHARACTERIZATION OF VARIANT ACADVLD PRO-490</scope>
    <scope>FUNCTION</scope>
    <scope>CATALYTIC ACTIVITY</scope>
    <scope>PATHWAY</scope>
    <scope>SUBSTRATE SPECIFICITY</scope>
    <scope>MUTAGENESIS OF ALA-490</scope>
</reference>
<reference key="22">
    <citation type="journal article" date="1998" name="FEBS Lett.">
        <title>Very-long-chain acyl-CoA dehydrogenase subunit assembles to the dimer form on mitochondrial inner membrane.</title>
        <authorList>
            <person name="Souri M."/>
            <person name="Aoyama T."/>
            <person name="Hoganson G."/>
            <person name="Hashimoto T."/>
        </authorList>
    </citation>
    <scope>VARIANT ACADVLD TRP-583</scope>
    <scope>CHARACTERIZATION OF VARIANT ACADVLD TRP-583</scope>
    <scope>FUNCTION</scope>
    <scope>CATALYTIC ACTIVITY</scope>
    <scope>PATHWAY</scope>
    <scope>SUBUNIT</scope>
    <scope>SUBCELLULAR LOCATION</scope>
    <scope>TOPOLOGY</scope>
</reference>
<reference key="23">
    <citation type="journal article" date="1999" name="Circulation">
        <title>Molecular heterogeneity in very-long-chain acyl-CoA dehydrogenase deficiency causing pediatric cardiomyopathy and sudden death.</title>
        <authorList>
            <person name="Mathur A."/>
            <person name="Sims H.F."/>
            <person name="Gopalakrishnan D."/>
            <person name="Gibson B."/>
            <person name="Rinaldo P."/>
            <person name="Vockley J."/>
            <person name="Hug G."/>
            <person name="Strauss A.W."/>
        </authorList>
    </citation>
    <scope>VARIANTS ACADVLD GLU-130 DEL; PRO-213; GLU-247; MET-260; LYS-278 DEL; ALA-283; ASP-441; LEU-458; PRO-490; LYS-534; TRP-613 AND GLN-615</scope>
</reference>
<name>ACADV_HUMAN</name>